<reference key="1">
    <citation type="submission" date="2007-04" db="EMBL/GenBank/DDBJ databases">
        <title>Complete sequence of Pyrobaculum arsenaticum DSM 13514.</title>
        <authorList>
            <consortium name="US DOE Joint Genome Institute"/>
            <person name="Copeland A."/>
            <person name="Lucas S."/>
            <person name="Lapidus A."/>
            <person name="Barry K."/>
            <person name="Glavina del Rio T."/>
            <person name="Dalin E."/>
            <person name="Tice H."/>
            <person name="Pitluck S."/>
            <person name="Chain P."/>
            <person name="Malfatti S."/>
            <person name="Shin M."/>
            <person name="Vergez L."/>
            <person name="Schmutz J."/>
            <person name="Larimer F."/>
            <person name="Land M."/>
            <person name="Hauser L."/>
            <person name="Kyrpides N."/>
            <person name="Mikhailova N."/>
            <person name="Cozen A.E."/>
            <person name="Fitz-Gibbon S.T."/>
            <person name="House C.H."/>
            <person name="Saltikov C."/>
            <person name="Lowe T.M."/>
            <person name="Richardson P."/>
        </authorList>
    </citation>
    <scope>NUCLEOTIDE SEQUENCE [LARGE SCALE GENOMIC DNA]</scope>
    <source>
        <strain>ATCC 700994 / DSM 13514 / JCM 11321 / PZ6</strain>
    </source>
</reference>
<organism>
    <name type="scientific">Pyrobaculum arsenaticum (strain DSM 13514 / JCM 11321 / PZ6)</name>
    <dbReference type="NCBI Taxonomy" id="340102"/>
    <lineage>
        <taxon>Archaea</taxon>
        <taxon>Thermoproteota</taxon>
        <taxon>Thermoprotei</taxon>
        <taxon>Thermoproteales</taxon>
        <taxon>Thermoproteaceae</taxon>
        <taxon>Pyrobaculum</taxon>
    </lineage>
</organism>
<proteinExistence type="inferred from homology"/>
<feature type="chain" id="PRO_1000147162" description="GTP cyclohydrolase III">
    <location>
        <begin position="1"/>
        <end position="221"/>
    </location>
</feature>
<keyword id="KW-0342">GTP-binding</keyword>
<keyword id="KW-0378">Hydrolase</keyword>
<keyword id="KW-0547">Nucleotide-binding</keyword>
<sequence length="221" mass="24405">MHKVVLISLRGYREWTESLGPRREHIIQKVQARIHGALWSSFTAVGALPHHFRYDYLIALANNVPRHWIDTAVAKIRRSSPVEVDYCIGMGETPLDAYRSCGEHKEGKESNAVVAHVDIVNSTDATRINGPIHTYLRALDMLRTAAGACEDVGCIAFYLGGDNMVVYLPEPKAIYALLDRVEAPVRAGVGVSPRPYTAFVKATKGLDALRAENKTGVKVVR</sequence>
<comment type="function">
    <text evidence="1">Catalyzes the formation of 2-amino-5-formylamino-6-ribofuranosylamino-4(3H)-pyrimidinone ribonucleotide monophosphate and inorganic phosphate from GTP. Also has an independent pyrophosphate phosphohydrolase activity.</text>
</comment>
<comment type="catalytic activity">
    <reaction evidence="1">
        <text>GTP + 3 H2O = 2-amino-5-formylamino-6-(5-phospho-D-ribosylamino)pyrimidin-4(3H)-one + 2 phosphate + 2 H(+)</text>
        <dbReference type="Rhea" id="RHEA:22468"/>
        <dbReference type="ChEBI" id="CHEBI:15377"/>
        <dbReference type="ChEBI" id="CHEBI:15378"/>
        <dbReference type="ChEBI" id="CHEBI:37565"/>
        <dbReference type="ChEBI" id="CHEBI:43474"/>
        <dbReference type="ChEBI" id="CHEBI:57258"/>
        <dbReference type="EC" id="3.5.4.29"/>
    </reaction>
</comment>
<comment type="similarity">
    <text evidence="1">Belongs to the archaeal-type GTP cyclohydrolase family.</text>
</comment>
<name>GCH3_PYRAR</name>
<protein>
    <recommendedName>
        <fullName evidence="1">GTP cyclohydrolase III</fullName>
        <ecNumber evidence="1">3.5.4.29</ecNumber>
    </recommendedName>
</protein>
<evidence type="ECO:0000255" key="1">
    <source>
        <dbReference type="HAMAP-Rule" id="MF_00608"/>
    </source>
</evidence>
<gene>
    <name evidence="1" type="primary">gch3</name>
    <name type="ordered locus">Pars_1351</name>
</gene>
<accession>A4WKJ7</accession>
<dbReference type="EC" id="3.5.4.29" evidence="1"/>
<dbReference type="EMBL" id="CP000660">
    <property type="protein sequence ID" value="ABP50914.1"/>
    <property type="molecule type" value="Genomic_DNA"/>
</dbReference>
<dbReference type="SMR" id="A4WKJ7"/>
<dbReference type="STRING" id="340102.Pars_1351"/>
<dbReference type="KEGG" id="pas:Pars_1351"/>
<dbReference type="HOGENOM" id="CLU_080076_0_0_2"/>
<dbReference type="OrthoDB" id="25211at2157"/>
<dbReference type="PhylomeDB" id="A4WKJ7"/>
<dbReference type="Proteomes" id="UP000001567">
    <property type="component" value="Chromosome"/>
</dbReference>
<dbReference type="GO" id="GO:0005525">
    <property type="term" value="F:GTP binding"/>
    <property type="evidence" value="ECO:0007669"/>
    <property type="project" value="UniProtKB-KW"/>
</dbReference>
<dbReference type="GO" id="GO:0043740">
    <property type="term" value="F:GTP cyclohydrolase IIa activity"/>
    <property type="evidence" value="ECO:0007669"/>
    <property type="project" value="UniProtKB-EC"/>
</dbReference>
<dbReference type="GO" id="GO:0009058">
    <property type="term" value="P:biosynthetic process"/>
    <property type="evidence" value="ECO:0007669"/>
    <property type="project" value="InterPro"/>
</dbReference>
<dbReference type="Gene3D" id="3.30.70.1230">
    <property type="entry name" value="Nucleotide cyclase"/>
    <property type="match status" value="2"/>
</dbReference>
<dbReference type="HAMAP" id="MF_00608">
    <property type="entry name" value="GTP_cyclohydro_3"/>
    <property type="match status" value="1"/>
</dbReference>
<dbReference type="InterPro" id="IPR007839">
    <property type="entry name" value="GTP_CycHdrlase_3"/>
</dbReference>
<dbReference type="InterPro" id="IPR029787">
    <property type="entry name" value="Nucleotide_cyclase"/>
</dbReference>
<dbReference type="PANTHER" id="PTHR42202">
    <property type="entry name" value="GTP CYCLOHYDROLASE III"/>
    <property type="match status" value="1"/>
</dbReference>
<dbReference type="PANTHER" id="PTHR42202:SF1">
    <property type="entry name" value="GTP CYCLOHYDROLASE III"/>
    <property type="match status" value="1"/>
</dbReference>
<dbReference type="Pfam" id="PF05165">
    <property type="entry name" value="GCH_III"/>
    <property type="match status" value="2"/>
</dbReference>
<dbReference type="PIRSF" id="PIRSF009265">
    <property type="entry name" value="GTP_cyclohydro_3"/>
    <property type="match status" value="1"/>
</dbReference>